<comment type="function">
    <text evidence="1">Catalyzes the phosphorylation of the 3'-hydroxyl group of dephosphocoenzyme A to form coenzyme A.</text>
</comment>
<comment type="catalytic activity">
    <reaction evidence="1">
        <text>3'-dephospho-CoA + ATP = ADP + CoA + H(+)</text>
        <dbReference type="Rhea" id="RHEA:18245"/>
        <dbReference type="ChEBI" id="CHEBI:15378"/>
        <dbReference type="ChEBI" id="CHEBI:30616"/>
        <dbReference type="ChEBI" id="CHEBI:57287"/>
        <dbReference type="ChEBI" id="CHEBI:57328"/>
        <dbReference type="ChEBI" id="CHEBI:456216"/>
        <dbReference type="EC" id="2.7.1.24"/>
    </reaction>
</comment>
<comment type="pathway">
    <text evidence="1">Cofactor biosynthesis; coenzyme A biosynthesis; CoA from (R)-pantothenate: step 5/5.</text>
</comment>
<comment type="subcellular location">
    <subcellularLocation>
        <location evidence="1">Cytoplasm</location>
    </subcellularLocation>
</comment>
<comment type="similarity">
    <text evidence="1">Belongs to the CoaE family.</text>
</comment>
<proteinExistence type="inferred from homology"/>
<dbReference type="EC" id="2.7.1.24" evidence="1"/>
<dbReference type="EMBL" id="CP000103">
    <property type="protein sequence ID" value="ABB75423.1"/>
    <property type="molecule type" value="Genomic_DNA"/>
</dbReference>
<dbReference type="RefSeq" id="WP_011381432.1">
    <property type="nucleotide sequence ID" value="NC_007614.1"/>
</dbReference>
<dbReference type="SMR" id="Q2Y748"/>
<dbReference type="STRING" id="323848.Nmul_A2130"/>
<dbReference type="KEGG" id="nmu:Nmul_A2130"/>
<dbReference type="eggNOG" id="COG0237">
    <property type="taxonomic scope" value="Bacteria"/>
</dbReference>
<dbReference type="HOGENOM" id="CLU_057180_1_2_4"/>
<dbReference type="OrthoDB" id="9812943at2"/>
<dbReference type="UniPathway" id="UPA00241">
    <property type="reaction ID" value="UER00356"/>
</dbReference>
<dbReference type="Proteomes" id="UP000002718">
    <property type="component" value="Chromosome"/>
</dbReference>
<dbReference type="GO" id="GO:0005737">
    <property type="term" value="C:cytoplasm"/>
    <property type="evidence" value="ECO:0007669"/>
    <property type="project" value="UniProtKB-SubCell"/>
</dbReference>
<dbReference type="GO" id="GO:0005524">
    <property type="term" value="F:ATP binding"/>
    <property type="evidence" value="ECO:0007669"/>
    <property type="project" value="UniProtKB-UniRule"/>
</dbReference>
<dbReference type="GO" id="GO:0004140">
    <property type="term" value="F:dephospho-CoA kinase activity"/>
    <property type="evidence" value="ECO:0007669"/>
    <property type="project" value="UniProtKB-UniRule"/>
</dbReference>
<dbReference type="GO" id="GO:0015937">
    <property type="term" value="P:coenzyme A biosynthetic process"/>
    <property type="evidence" value="ECO:0007669"/>
    <property type="project" value="UniProtKB-UniRule"/>
</dbReference>
<dbReference type="CDD" id="cd02022">
    <property type="entry name" value="DPCK"/>
    <property type="match status" value="1"/>
</dbReference>
<dbReference type="Gene3D" id="3.40.50.300">
    <property type="entry name" value="P-loop containing nucleotide triphosphate hydrolases"/>
    <property type="match status" value="1"/>
</dbReference>
<dbReference type="HAMAP" id="MF_00376">
    <property type="entry name" value="Dephospho_CoA_kinase"/>
    <property type="match status" value="1"/>
</dbReference>
<dbReference type="InterPro" id="IPR001977">
    <property type="entry name" value="Depp_CoAkinase"/>
</dbReference>
<dbReference type="InterPro" id="IPR027417">
    <property type="entry name" value="P-loop_NTPase"/>
</dbReference>
<dbReference type="NCBIfam" id="TIGR00152">
    <property type="entry name" value="dephospho-CoA kinase"/>
    <property type="match status" value="1"/>
</dbReference>
<dbReference type="PANTHER" id="PTHR10695:SF46">
    <property type="entry name" value="BIFUNCTIONAL COENZYME A SYNTHASE-RELATED"/>
    <property type="match status" value="1"/>
</dbReference>
<dbReference type="PANTHER" id="PTHR10695">
    <property type="entry name" value="DEPHOSPHO-COA KINASE-RELATED"/>
    <property type="match status" value="1"/>
</dbReference>
<dbReference type="Pfam" id="PF01121">
    <property type="entry name" value="CoaE"/>
    <property type="match status" value="1"/>
</dbReference>
<dbReference type="SUPFAM" id="SSF52540">
    <property type="entry name" value="P-loop containing nucleoside triphosphate hydrolases"/>
    <property type="match status" value="1"/>
</dbReference>
<dbReference type="PROSITE" id="PS51219">
    <property type="entry name" value="DPCK"/>
    <property type="match status" value="1"/>
</dbReference>
<accession>Q2Y748</accession>
<name>COAE_NITMU</name>
<sequence length="200" mass="21695">MLVIGLTGGIGSGKTSAANIFSALGAGVVDTDEIAHELTQSGGRSLPAIRRAFGEKYITPEGALNRKEMRNLVFNDTDARRKLEAILHPLIRDEVSRRVGLAQGPYLIIVVPLLLETGHYRGIVQRVLVVDCSEGAQISRATARSGMNEQAVRAIMVAQVSRDERLGQADDVIVNNADLPNLERQVRALHKKYMTLAQGS</sequence>
<evidence type="ECO:0000255" key="1">
    <source>
        <dbReference type="HAMAP-Rule" id="MF_00376"/>
    </source>
</evidence>
<organism>
    <name type="scientific">Nitrosospira multiformis (strain ATCC 25196 / NCIMB 11849 / C 71)</name>
    <dbReference type="NCBI Taxonomy" id="323848"/>
    <lineage>
        <taxon>Bacteria</taxon>
        <taxon>Pseudomonadati</taxon>
        <taxon>Pseudomonadota</taxon>
        <taxon>Betaproteobacteria</taxon>
        <taxon>Nitrosomonadales</taxon>
        <taxon>Nitrosomonadaceae</taxon>
        <taxon>Nitrosospira</taxon>
    </lineage>
</organism>
<reference key="1">
    <citation type="submission" date="2005-08" db="EMBL/GenBank/DDBJ databases">
        <title>Complete sequence of chromosome 1 of Nitrosospira multiformis ATCC 25196.</title>
        <authorList>
            <person name="Copeland A."/>
            <person name="Lucas S."/>
            <person name="Lapidus A."/>
            <person name="Barry K."/>
            <person name="Detter J.C."/>
            <person name="Glavina T."/>
            <person name="Hammon N."/>
            <person name="Israni S."/>
            <person name="Pitluck S."/>
            <person name="Chain P."/>
            <person name="Malfatti S."/>
            <person name="Shin M."/>
            <person name="Vergez L."/>
            <person name="Schmutz J."/>
            <person name="Larimer F."/>
            <person name="Land M."/>
            <person name="Hauser L."/>
            <person name="Kyrpides N."/>
            <person name="Lykidis A."/>
            <person name="Richardson P."/>
        </authorList>
    </citation>
    <scope>NUCLEOTIDE SEQUENCE [LARGE SCALE GENOMIC DNA]</scope>
    <source>
        <strain>ATCC 25196 / NCIMB 11849 / C 71</strain>
    </source>
</reference>
<protein>
    <recommendedName>
        <fullName evidence="1">Dephospho-CoA kinase</fullName>
        <ecNumber evidence="1">2.7.1.24</ecNumber>
    </recommendedName>
    <alternativeName>
        <fullName evidence="1">Dephosphocoenzyme A kinase</fullName>
    </alternativeName>
</protein>
<feature type="chain" id="PRO_0000243310" description="Dephospho-CoA kinase">
    <location>
        <begin position="1"/>
        <end position="200"/>
    </location>
</feature>
<feature type="domain" description="DPCK" evidence="1">
    <location>
        <begin position="3"/>
        <end position="200"/>
    </location>
</feature>
<feature type="binding site" evidence="1">
    <location>
        <begin position="11"/>
        <end position="16"/>
    </location>
    <ligand>
        <name>ATP</name>
        <dbReference type="ChEBI" id="CHEBI:30616"/>
    </ligand>
</feature>
<gene>
    <name evidence="1" type="primary">coaE</name>
    <name type="ordered locus">Nmul_A2130</name>
</gene>
<keyword id="KW-0067">ATP-binding</keyword>
<keyword id="KW-0173">Coenzyme A biosynthesis</keyword>
<keyword id="KW-0963">Cytoplasm</keyword>
<keyword id="KW-0418">Kinase</keyword>
<keyword id="KW-0547">Nucleotide-binding</keyword>
<keyword id="KW-1185">Reference proteome</keyword>
<keyword id="KW-0808">Transferase</keyword>